<evidence type="ECO:0000255" key="1">
    <source>
        <dbReference type="HAMAP-Rule" id="MF_00391"/>
    </source>
</evidence>
<evidence type="ECO:0000305" key="2"/>
<dbReference type="EMBL" id="AE016827">
    <property type="protein sequence ID" value="AAU37091.1"/>
    <property type="molecule type" value="Genomic_DNA"/>
</dbReference>
<dbReference type="RefSeq" id="WP_005539760.1">
    <property type="nucleotide sequence ID" value="NC_006300.1"/>
</dbReference>
<dbReference type="SMR" id="Q65VB9"/>
<dbReference type="STRING" id="221988.MS0484"/>
<dbReference type="GeneID" id="93297198"/>
<dbReference type="KEGG" id="msu:MS0484"/>
<dbReference type="eggNOG" id="COG0230">
    <property type="taxonomic scope" value="Bacteria"/>
</dbReference>
<dbReference type="HOGENOM" id="CLU_129938_2_0_6"/>
<dbReference type="OrthoDB" id="9804164at2"/>
<dbReference type="Proteomes" id="UP000000607">
    <property type="component" value="Chromosome"/>
</dbReference>
<dbReference type="GO" id="GO:1990904">
    <property type="term" value="C:ribonucleoprotein complex"/>
    <property type="evidence" value="ECO:0007669"/>
    <property type="project" value="UniProtKB-KW"/>
</dbReference>
<dbReference type="GO" id="GO:0005840">
    <property type="term" value="C:ribosome"/>
    <property type="evidence" value="ECO:0007669"/>
    <property type="project" value="UniProtKB-KW"/>
</dbReference>
<dbReference type="GO" id="GO:0003735">
    <property type="term" value="F:structural constituent of ribosome"/>
    <property type="evidence" value="ECO:0007669"/>
    <property type="project" value="InterPro"/>
</dbReference>
<dbReference type="GO" id="GO:0006412">
    <property type="term" value="P:translation"/>
    <property type="evidence" value="ECO:0007669"/>
    <property type="project" value="UniProtKB-UniRule"/>
</dbReference>
<dbReference type="FunFam" id="1.10.287.3980:FF:000001">
    <property type="entry name" value="Mitochondrial ribosomal protein L34"/>
    <property type="match status" value="1"/>
</dbReference>
<dbReference type="Gene3D" id="1.10.287.3980">
    <property type="match status" value="1"/>
</dbReference>
<dbReference type="HAMAP" id="MF_00391">
    <property type="entry name" value="Ribosomal_bL34"/>
    <property type="match status" value="1"/>
</dbReference>
<dbReference type="InterPro" id="IPR000271">
    <property type="entry name" value="Ribosomal_bL34"/>
</dbReference>
<dbReference type="InterPro" id="IPR020939">
    <property type="entry name" value="Ribosomal_bL34_CS"/>
</dbReference>
<dbReference type="NCBIfam" id="TIGR01030">
    <property type="entry name" value="rpmH_bact"/>
    <property type="match status" value="1"/>
</dbReference>
<dbReference type="PANTHER" id="PTHR14503:SF4">
    <property type="entry name" value="LARGE RIBOSOMAL SUBUNIT PROTEIN BL34M"/>
    <property type="match status" value="1"/>
</dbReference>
<dbReference type="PANTHER" id="PTHR14503">
    <property type="entry name" value="MITOCHONDRIAL RIBOSOMAL PROTEIN 34 FAMILY MEMBER"/>
    <property type="match status" value="1"/>
</dbReference>
<dbReference type="Pfam" id="PF00468">
    <property type="entry name" value="Ribosomal_L34"/>
    <property type="match status" value="1"/>
</dbReference>
<dbReference type="PROSITE" id="PS00784">
    <property type="entry name" value="RIBOSOMAL_L34"/>
    <property type="match status" value="1"/>
</dbReference>
<keyword id="KW-0687">Ribonucleoprotein</keyword>
<keyword id="KW-0689">Ribosomal protein</keyword>
<name>RL34_MANSM</name>
<feature type="chain" id="PRO_0000187406" description="Large ribosomal subunit protein bL34">
    <location>
        <begin position="1"/>
        <end position="44"/>
    </location>
</feature>
<proteinExistence type="inferred from homology"/>
<protein>
    <recommendedName>
        <fullName evidence="1">Large ribosomal subunit protein bL34</fullName>
    </recommendedName>
    <alternativeName>
        <fullName evidence="2">50S ribosomal protein L34</fullName>
    </alternativeName>
</protein>
<comment type="similarity">
    <text evidence="1">Belongs to the bacterial ribosomal protein bL34 family.</text>
</comment>
<organism>
    <name type="scientific">Mannheimia succiniciproducens (strain KCTC 0769BP / MBEL55E)</name>
    <dbReference type="NCBI Taxonomy" id="221988"/>
    <lineage>
        <taxon>Bacteria</taxon>
        <taxon>Pseudomonadati</taxon>
        <taxon>Pseudomonadota</taxon>
        <taxon>Gammaproteobacteria</taxon>
        <taxon>Pasteurellales</taxon>
        <taxon>Pasteurellaceae</taxon>
        <taxon>Basfia</taxon>
    </lineage>
</organism>
<sequence length="44" mass="5098">MKRTFQPSVLKRSRTHGFRARMATKNGRQVLARRRAKGRKSLSA</sequence>
<gene>
    <name evidence="1" type="primary">rpmH</name>
    <name type="ordered locus">MS0484</name>
</gene>
<accession>Q65VB9</accession>
<reference key="1">
    <citation type="journal article" date="2004" name="Nat. Biotechnol.">
        <title>The genome sequence of the capnophilic rumen bacterium Mannheimia succiniciproducens.</title>
        <authorList>
            <person name="Hong S.H."/>
            <person name="Kim J.S."/>
            <person name="Lee S.Y."/>
            <person name="In Y.H."/>
            <person name="Choi S.S."/>
            <person name="Rih J.-K."/>
            <person name="Kim C.H."/>
            <person name="Jeong H."/>
            <person name="Hur C.G."/>
            <person name="Kim J.J."/>
        </authorList>
    </citation>
    <scope>NUCLEOTIDE SEQUENCE [LARGE SCALE GENOMIC DNA]</scope>
    <source>
        <strain>KCTC 0769BP / MBEL55E</strain>
    </source>
</reference>